<reference key="1">
    <citation type="journal article" date="2005" name="J. Bacteriol.">
        <title>Completion of the genome sequence of Brucella abortus and comparison to the highly similar genomes of Brucella melitensis and Brucella suis.</title>
        <authorList>
            <person name="Halling S.M."/>
            <person name="Peterson-Burch B.D."/>
            <person name="Bricker B.J."/>
            <person name="Zuerner R.L."/>
            <person name="Qing Z."/>
            <person name="Li L.-L."/>
            <person name="Kapur V."/>
            <person name="Alt D.P."/>
            <person name="Olsen S.C."/>
        </authorList>
    </citation>
    <scope>NUCLEOTIDE SEQUENCE [LARGE SCALE GENOMIC DNA]</scope>
    <source>
        <strain>9-941</strain>
    </source>
</reference>
<sequence length="238" mass="26440">MLFPTPLISGRLERRYKRFLADVTLDDGRFITASVPNTGSMLGLTAPGSRVWLSFSDAPHRKYAHTLQIVEADNTLVGVNTGLPNRIAEEAILKGLIPDLDGYATLKREQKYGRNSRIDLLLDDGPRPRAYVEVKNVHFIRTPGLAEFPDTVTARGAKHLDELVDVVAAGHRGIMLFIIQRADCSRFGISGDLDPFYARAFERAIASGVEAWAVRCHITENGIDATELVPIEDMRRIE</sequence>
<accession>Q57CL5</accession>
<gene>
    <name evidence="1" type="primary">sfsA</name>
    <name type="ordered locus">BruAb1_1282</name>
</gene>
<feature type="chain" id="PRO_1000007970" description="Sugar fermentation stimulation protein homolog">
    <location>
        <begin position="1"/>
        <end position="238"/>
    </location>
</feature>
<evidence type="ECO:0000255" key="1">
    <source>
        <dbReference type="HAMAP-Rule" id="MF_00095"/>
    </source>
</evidence>
<organism>
    <name type="scientific">Brucella abortus biovar 1 (strain 9-941)</name>
    <dbReference type="NCBI Taxonomy" id="262698"/>
    <lineage>
        <taxon>Bacteria</taxon>
        <taxon>Pseudomonadati</taxon>
        <taxon>Pseudomonadota</taxon>
        <taxon>Alphaproteobacteria</taxon>
        <taxon>Hyphomicrobiales</taxon>
        <taxon>Brucellaceae</taxon>
        <taxon>Brucella/Ochrobactrum group</taxon>
        <taxon>Brucella</taxon>
    </lineage>
</organism>
<protein>
    <recommendedName>
        <fullName evidence="1">Sugar fermentation stimulation protein homolog</fullName>
    </recommendedName>
</protein>
<dbReference type="EMBL" id="AE017223">
    <property type="protein sequence ID" value="AAX74619.1"/>
    <property type="molecule type" value="Genomic_DNA"/>
</dbReference>
<dbReference type="RefSeq" id="WP_002964399.1">
    <property type="nucleotide sequence ID" value="NC_006932.1"/>
</dbReference>
<dbReference type="SMR" id="Q57CL5"/>
<dbReference type="EnsemblBacteria" id="AAX74619">
    <property type="protein sequence ID" value="AAX74619"/>
    <property type="gene ID" value="BruAb1_1282"/>
</dbReference>
<dbReference type="GeneID" id="97533485"/>
<dbReference type="KEGG" id="bmb:BruAb1_1282"/>
<dbReference type="HOGENOM" id="CLU_052299_2_0_5"/>
<dbReference type="Proteomes" id="UP000000540">
    <property type="component" value="Chromosome I"/>
</dbReference>
<dbReference type="GO" id="GO:0003677">
    <property type="term" value="F:DNA binding"/>
    <property type="evidence" value="ECO:0007669"/>
    <property type="project" value="InterPro"/>
</dbReference>
<dbReference type="CDD" id="cd22359">
    <property type="entry name" value="SfsA-like_bacterial"/>
    <property type="match status" value="1"/>
</dbReference>
<dbReference type="Gene3D" id="2.40.50.580">
    <property type="match status" value="1"/>
</dbReference>
<dbReference type="Gene3D" id="3.40.1350.60">
    <property type="match status" value="1"/>
</dbReference>
<dbReference type="HAMAP" id="MF_00095">
    <property type="entry name" value="SfsA"/>
    <property type="match status" value="1"/>
</dbReference>
<dbReference type="InterPro" id="IPR005224">
    <property type="entry name" value="SfsA"/>
</dbReference>
<dbReference type="InterPro" id="IPR040452">
    <property type="entry name" value="SfsA_C"/>
</dbReference>
<dbReference type="InterPro" id="IPR041465">
    <property type="entry name" value="SfsA_N"/>
</dbReference>
<dbReference type="NCBIfam" id="TIGR00230">
    <property type="entry name" value="sfsA"/>
    <property type="match status" value="1"/>
</dbReference>
<dbReference type="PANTHER" id="PTHR30545">
    <property type="entry name" value="SUGAR FERMENTATION STIMULATION PROTEIN A"/>
    <property type="match status" value="1"/>
</dbReference>
<dbReference type="PANTHER" id="PTHR30545:SF2">
    <property type="entry name" value="SUGAR FERMENTATION STIMULATION PROTEIN A"/>
    <property type="match status" value="1"/>
</dbReference>
<dbReference type="Pfam" id="PF03749">
    <property type="entry name" value="SfsA"/>
    <property type="match status" value="1"/>
</dbReference>
<dbReference type="Pfam" id="PF17746">
    <property type="entry name" value="SfsA_N"/>
    <property type="match status" value="1"/>
</dbReference>
<name>SFSA_BRUAB</name>
<comment type="similarity">
    <text evidence="1">Belongs to the SfsA family.</text>
</comment>
<proteinExistence type="inferred from homology"/>